<accession>P57169</accession>
<comment type="function">
    <text evidence="1">Catalyzes the addition and repair of the essential 3'-terminal CCA sequence in tRNAs without using a nucleic acid template. Adds these three nucleotides in the order of C, C, and A to the tRNA nucleotide-73, using CTP and ATP as substrates and producing inorganic pyrophosphate. tRNA 3'-terminal CCA addition is required both for tRNA processing and repair. Also involved in tRNA surveillance by mediating tandem CCA addition to generate a CCACCA at the 3' terminus of unstable tRNAs. While stable tRNAs receive only 3'-terminal CCA, unstable tRNAs are marked with CCACCA and rapidly degraded.</text>
</comment>
<comment type="catalytic activity">
    <reaction evidence="1">
        <text>a tRNA precursor + 2 CTP + ATP = a tRNA with a 3' CCA end + 3 diphosphate</text>
        <dbReference type="Rhea" id="RHEA:14433"/>
        <dbReference type="Rhea" id="RHEA-COMP:10465"/>
        <dbReference type="Rhea" id="RHEA-COMP:10468"/>
        <dbReference type="ChEBI" id="CHEBI:30616"/>
        <dbReference type="ChEBI" id="CHEBI:33019"/>
        <dbReference type="ChEBI" id="CHEBI:37563"/>
        <dbReference type="ChEBI" id="CHEBI:74896"/>
        <dbReference type="ChEBI" id="CHEBI:83071"/>
        <dbReference type="EC" id="2.7.7.72"/>
    </reaction>
</comment>
<comment type="catalytic activity">
    <reaction evidence="1">
        <text>a tRNA with a 3' CCA end + 2 CTP + ATP = a tRNA with a 3' CCACCA end + 3 diphosphate</text>
        <dbReference type="Rhea" id="RHEA:76235"/>
        <dbReference type="Rhea" id="RHEA-COMP:10468"/>
        <dbReference type="Rhea" id="RHEA-COMP:18655"/>
        <dbReference type="ChEBI" id="CHEBI:30616"/>
        <dbReference type="ChEBI" id="CHEBI:33019"/>
        <dbReference type="ChEBI" id="CHEBI:37563"/>
        <dbReference type="ChEBI" id="CHEBI:83071"/>
        <dbReference type="ChEBI" id="CHEBI:195187"/>
    </reaction>
    <physiologicalReaction direction="left-to-right" evidence="1">
        <dbReference type="Rhea" id="RHEA:76236"/>
    </physiologicalReaction>
</comment>
<comment type="cofactor">
    <cofactor evidence="1">
        <name>Mg(2+)</name>
        <dbReference type="ChEBI" id="CHEBI:18420"/>
    </cofactor>
</comment>
<comment type="miscellaneous">
    <text evidence="1">A single active site specifically recognizes both ATP and CTP and is responsible for their addition.</text>
</comment>
<comment type="similarity">
    <text evidence="1">Belongs to the tRNA nucleotidyltransferase/poly(A) polymerase family. Bacterial CCA-adding enzyme type 2 subfamily.</text>
</comment>
<keyword id="KW-0067">ATP-binding</keyword>
<keyword id="KW-0460">Magnesium</keyword>
<keyword id="KW-0479">Metal-binding</keyword>
<keyword id="KW-0547">Nucleotide-binding</keyword>
<keyword id="KW-0548">Nucleotidyltransferase</keyword>
<keyword id="KW-1185">Reference proteome</keyword>
<keyword id="KW-0692">RNA repair</keyword>
<keyword id="KW-0694">RNA-binding</keyword>
<keyword id="KW-0808">Transferase</keyword>
<keyword id="KW-0819">tRNA processing</keyword>
<gene>
    <name evidence="1" type="primary">cca</name>
    <name type="ordered locus">BU061</name>
</gene>
<dbReference type="EC" id="2.7.7.72" evidence="1"/>
<dbReference type="EMBL" id="BA000003">
    <property type="protein sequence ID" value="BAB12784.1"/>
    <property type="molecule type" value="Genomic_DNA"/>
</dbReference>
<dbReference type="RefSeq" id="NP_239898.1">
    <property type="nucleotide sequence ID" value="NC_002528.1"/>
</dbReference>
<dbReference type="RefSeq" id="WP_009874018.1">
    <property type="nucleotide sequence ID" value="NZ_AP036055.1"/>
</dbReference>
<dbReference type="SMR" id="P57169"/>
<dbReference type="STRING" id="563178.BUAP5A_060"/>
<dbReference type="EnsemblBacteria" id="BAB12784">
    <property type="protein sequence ID" value="BAB12784"/>
    <property type="gene ID" value="BAB12784"/>
</dbReference>
<dbReference type="KEGG" id="buc:BU061"/>
<dbReference type="PATRIC" id="fig|107806.10.peg.70"/>
<dbReference type="eggNOG" id="COG0617">
    <property type="taxonomic scope" value="Bacteria"/>
</dbReference>
<dbReference type="HOGENOM" id="CLU_015961_1_1_6"/>
<dbReference type="Proteomes" id="UP000001806">
    <property type="component" value="Chromosome"/>
</dbReference>
<dbReference type="GO" id="GO:0005524">
    <property type="term" value="F:ATP binding"/>
    <property type="evidence" value="ECO:0007669"/>
    <property type="project" value="UniProtKB-UniRule"/>
</dbReference>
<dbReference type="GO" id="GO:0004810">
    <property type="term" value="F:CCA tRNA nucleotidyltransferase activity"/>
    <property type="evidence" value="ECO:0007669"/>
    <property type="project" value="UniProtKB-UniRule"/>
</dbReference>
<dbReference type="GO" id="GO:0000287">
    <property type="term" value="F:magnesium ion binding"/>
    <property type="evidence" value="ECO:0007669"/>
    <property type="project" value="UniProtKB-UniRule"/>
</dbReference>
<dbReference type="GO" id="GO:0000049">
    <property type="term" value="F:tRNA binding"/>
    <property type="evidence" value="ECO:0007669"/>
    <property type="project" value="UniProtKB-UniRule"/>
</dbReference>
<dbReference type="GO" id="GO:0042245">
    <property type="term" value="P:RNA repair"/>
    <property type="evidence" value="ECO:0007669"/>
    <property type="project" value="UniProtKB-KW"/>
</dbReference>
<dbReference type="GO" id="GO:0001680">
    <property type="term" value="P:tRNA 3'-terminal CCA addition"/>
    <property type="evidence" value="ECO:0007669"/>
    <property type="project" value="UniProtKB-UniRule"/>
</dbReference>
<dbReference type="Gene3D" id="3.30.460.10">
    <property type="entry name" value="Beta Polymerase, domain 2"/>
    <property type="match status" value="1"/>
</dbReference>
<dbReference type="Gene3D" id="1.10.3090.10">
    <property type="entry name" value="cca-adding enzyme, domain 2"/>
    <property type="match status" value="1"/>
</dbReference>
<dbReference type="HAMAP" id="MF_01262">
    <property type="entry name" value="CCA_bact_type2"/>
    <property type="match status" value="1"/>
</dbReference>
<dbReference type="InterPro" id="IPR012006">
    <property type="entry name" value="CCA_bact"/>
</dbReference>
<dbReference type="InterPro" id="IPR043519">
    <property type="entry name" value="NT_sf"/>
</dbReference>
<dbReference type="InterPro" id="IPR002646">
    <property type="entry name" value="PolA_pol_head_dom"/>
</dbReference>
<dbReference type="InterPro" id="IPR032828">
    <property type="entry name" value="PolyA_RNA-bd"/>
</dbReference>
<dbReference type="InterPro" id="IPR050124">
    <property type="entry name" value="tRNA_CCA-adding_enzyme"/>
</dbReference>
<dbReference type="NCBIfam" id="NF009813">
    <property type="entry name" value="PRK13298.1"/>
    <property type="match status" value="1"/>
</dbReference>
<dbReference type="PANTHER" id="PTHR47545">
    <property type="entry name" value="MULTIFUNCTIONAL CCA PROTEIN"/>
    <property type="match status" value="1"/>
</dbReference>
<dbReference type="PANTHER" id="PTHR47545:SF1">
    <property type="entry name" value="MULTIFUNCTIONAL CCA PROTEIN"/>
    <property type="match status" value="1"/>
</dbReference>
<dbReference type="Pfam" id="PF01743">
    <property type="entry name" value="PolyA_pol"/>
    <property type="match status" value="1"/>
</dbReference>
<dbReference type="Pfam" id="PF12627">
    <property type="entry name" value="PolyA_pol_RNAbd"/>
    <property type="match status" value="1"/>
</dbReference>
<dbReference type="PIRSF" id="PIRSF000813">
    <property type="entry name" value="CCA_bact"/>
    <property type="match status" value="1"/>
</dbReference>
<dbReference type="SUPFAM" id="SSF81301">
    <property type="entry name" value="Nucleotidyltransferase"/>
    <property type="match status" value="1"/>
</dbReference>
<dbReference type="SUPFAM" id="SSF81891">
    <property type="entry name" value="Poly A polymerase C-terminal region-like"/>
    <property type="match status" value="1"/>
</dbReference>
<sequence length="414" mass="48811">MKIYLVGGAVRDSLLNLPVKDKDWVVVGGTEKILLERNFQQVGKDFPVFLHPETHEEYALARKERKSGKGYTGFDTDCNSDVTLEEDLIRRDLTINAIAQDEYGNYIDPFQGKKDIECGLIRHVSESFIEDPLRVLRVARFAATLVHLGFKIAEETMLLMCIIVKKQELSYLTSNRIWNETEKALKTLNPHVYFQVLYECNALHFFFPEMYFLYEKKNFLNRSFFKKFCNKNIILMGLAEISLLNKDIDVRFSYLCQFLSVNQIDRNYSKIFFDSYAASIIHSVCKRFKIPSYIRDIAVLNTGFYFFLNTIHYQSSKNIINLFSKVDAWRKPDRVKKLAFLSNFNFLRNFKSEFFCIKSGCFLEKCFSVVKNVSIKLILKKGFKGYEIKQEITRLRIKKLEFWRIKNIKHRFYL</sequence>
<name>CCA_BUCAI</name>
<feature type="chain" id="PRO_0000139017" description="CCA-adding enzyme">
    <location>
        <begin position="1"/>
        <end position="414"/>
    </location>
</feature>
<feature type="binding site" evidence="1">
    <location>
        <position position="8"/>
    </location>
    <ligand>
        <name>ATP</name>
        <dbReference type="ChEBI" id="CHEBI:30616"/>
    </ligand>
</feature>
<feature type="binding site" evidence="1">
    <location>
        <position position="8"/>
    </location>
    <ligand>
        <name>CTP</name>
        <dbReference type="ChEBI" id="CHEBI:37563"/>
    </ligand>
</feature>
<feature type="binding site" evidence="1">
    <location>
        <position position="11"/>
    </location>
    <ligand>
        <name>ATP</name>
        <dbReference type="ChEBI" id="CHEBI:30616"/>
    </ligand>
</feature>
<feature type="binding site" evidence="1">
    <location>
        <position position="11"/>
    </location>
    <ligand>
        <name>CTP</name>
        <dbReference type="ChEBI" id="CHEBI:37563"/>
    </ligand>
</feature>
<feature type="binding site" evidence="1">
    <location>
        <position position="21"/>
    </location>
    <ligand>
        <name>Mg(2+)</name>
        <dbReference type="ChEBI" id="CHEBI:18420"/>
    </ligand>
</feature>
<feature type="binding site" evidence="1">
    <location>
        <position position="23"/>
    </location>
    <ligand>
        <name>Mg(2+)</name>
        <dbReference type="ChEBI" id="CHEBI:18420"/>
    </ligand>
</feature>
<feature type="binding site" evidence="1">
    <location>
        <position position="91"/>
    </location>
    <ligand>
        <name>ATP</name>
        <dbReference type="ChEBI" id="CHEBI:30616"/>
    </ligand>
</feature>
<feature type="binding site" evidence="1">
    <location>
        <position position="91"/>
    </location>
    <ligand>
        <name>CTP</name>
        <dbReference type="ChEBI" id="CHEBI:37563"/>
    </ligand>
</feature>
<feature type="binding site" evidence="1">
    <location>
        <position position="137"/>
    </location>
    <ligand>
        <name>ATP</name>
        <dbReference type="ChEBI" id="CHEBI:30616"/>
    </ligand>
</feature>
<feature type="binding site" evidence="1">
    <location>
        <position position="137"/>
    </location>
    <ligand>
        <name>CTP</name>
        <dbReference type="ChEBI" id="CHEBI:37563"/>
    </ligand>
</feature>
<feature type="binding site" evidence="1">
    <location>
        <position position="140"/>
    </location>
    <ligand>
        <name>ATP</name>
        <dbReference type="ChEBI" id="CHEBI:30616"/>
    </ligand>
</feature>
<feature type="binding site" evidence="1">
    <location>
        <position position="140"/>
    </location>
    <ligand>
        <name>CTP</name>
        <dbReference type="ChEBI" id="CHEBI:37563"/>
    </ligand>
</feature>
<proteinExistence type="inferred from homology"/>
<evidence type="ECO:0000255" key="1">
    <source>
        <dbReference type="HAMAP-Rule" id="MF_01262"/>
    </source>
</evidence>
<protein>
    <recommendedName>
        <fullName evidence="1">CCA-adding enzyme</fullName>
        <ecNumber evidence="1">2.7.7.72</ecNumber>
    </recommendedName>
    <alternativeName>
        <fullName evidence="1">CCA tRNA nucleotidyltransferase</fullName>
    </alternativeName>
    <alternativeName>
        <fullName evidence="1">tRNA CCA-pyrophosphorylase</fullName>
    </alternativeName>
    <alternativeName>
        <fullName evidence="1">tRNA adenylyl-/cytidylyl- transferase</fullName>
    </alternativeName>
    <alternativeName>
        <fullName evidence="1">tRNA nucleotidyltransferase</fullName>
    </alternativeName>
    <alternativeName>
        <fullName evidence="1">tRNA-NT</fullName>
    </alternativeName>
</protein>
<reference key="1">
    <citation type="journal article" date="2000" name="Nature">
        <title>Genome sequence of the endocellular bacterial symbiont of aphids Buchnera sp. APS.</title>
        <authorList>
            <person name="Shigenobu S."/>
            <person name="Watanabe H."/>
            <person name="Hattori M."/>
            <person name="Sakaki Y."/>
            <person name="Ishikawa H."/>
        </authorList>
    </citation>
    <scope>NUCLEOTIDE SEQUENCE [LARGE SCALE GENOMIC DNA]</scope>
    <source>
        <strain>APS</strain>
    </source>
</reference>
<organism>
    <name type="scientific">Buchnera aphidicola subsp. Acyrthosiphon pisum (strain APS)</name>
    <name type="common">Acyrthosiphon pisum symbiotic bacterium</name>
    <dbReference type="NCBI Taxonomy" id="107806"/>
    <lineage>
        <taxon>Bacteria</taxon>
        <taxon>Pseudomonadati</taxon>
        <taxon>Pseudomonadota</taxon>
        <taxon>Gammaproteobacteria</taxon>
        <taxon>Enterobacterales</taxon>
        <taxon>Erwiniaceae</taxon>
        <taxon>Buchnera</taxon>
    </lineage>
</organism>